<protein>
    <recommendedName>
        <fullName evidence="1">Regulator of ribonuclease activity B</fullName>
    </recommendedName>
</protein>
<organism>
    <name type="scientific">Idiomarina loihiensis (strain ATCC BAA-735 / DSM 15497 / L2-TR)</name>
    <dbReference type="NCBI Taxonomy" id="283942"/>
    <lineage>
        <taxon>Bacteria</taxon>
        <taxon>Pseudomonadati</taxon>
        <taxon>Pseudomonadota</taxon>
        <taxon>Gammaproteobacteria</taxon>
        <taxon>Alteromonadales</taxon>
        <taxon>Idiomarinaceae</taxon>
        <taxon>Idiomarina</taxon>
    </lineage>
</organism>
<accession>Q5QY14</accession>
<sequence length="128" mass="14641">MSRDLNDLLTQSEETVQALIADGAETELLYEIEHHLASQDFTKLEKAAVELVKQGYHVDDADEFEDERGKRWFAFMAVTDAELDNDILNRQVREIAAIADECEVEYDGWGTLIEDEELDDEDLDDGEE</sequence>
<reference key="1">
    <citation type="journal article" date="2004" name="Proc. Natl. Acad. Sci. U.S.A.">
        <title>Genome sequence of the deep-sea gamma-proteobacterium Idiomarina loihiensis reveals amino acid fermentation as a source of carbon and energy.</title>
        <authorList>
            <person name="Hou S."/>
            <person name="Saw J.H."/>
            <person name="Lee K.S."/>
            <person name="Freitas T.A."/>
            <person name="Belisle C."/>
            <person name="Kawarabayasi Y."/>
            <person name="Donachie S.P."/>
            <person name="Pikina A."/>
            <person name="Galperin M.Y."/>
            <person name="Koonin E.V."/>
            <person name="Makarova K.S."/>
            <person name="Omelchenko M.V."/>
            <person name="Sorokin A."/>
            <person name="Wolf Y.I."/>
            <person name="Li Q.X."/>
            <person name="Keum Y.S."/>
            <person name="Campbell S."/>
            <person name="Denery J."/>
            <person name="Aizawa S."/>
            <person name="Shibata S."/>
            <person name="Malahoff A."/>
            <person name="Alam M."/>
        </authorList>
    </citation>
    <scope>NUCLEOTIDE SEQUENCE [LARGE SCALE GENOMIC DNA]</scope>
    <source>
        <strain>ATCC BAA-735 / DSM 15497 / L2-TR</strain>
    </source>
</reference>
<feature type="chain" id="PRO_0000404308" description="Regulator of ribonuclease activity B">
    <location>
        <begin position="1"/>
        <end position="128"/>
    </location>
</feature>
<proteinExistence type="inferred from homology"/>
<keyword id="KW-0963">Cytoplasm</keyword>
<keyword id="KW-1185">Reference proteome</keyword>
<dbReference type="EMBL" id="AE017340">
    <property type="protein sequence ID" value="AAV82783.1"/>
    <property type="molecule type" value="Genomic_DNA"/>
</dbReference>
<dbReference type="RefSeq" id="WP_011235179.1">
    <property type="nucleotide sequence ID" value="NC_006512.1"/>
</dbReference>
<dbReference type="SMR" id="Q5QY14"/>
<dbReference type="STRING" id="283942.IL1951"/>
<dbReference type="GeneID" id="41337141"/>
<dbReference type="KEGG" id="ilo:IL1951"/>
<dbReference type="eggNOG" id="COG3076">
    <property type="taxonomic scope" value="Bacteria"/>
</dbReference>
<dbReference type="HOGENOM" id="CLU_128640_0_0_6"/>
<dbReference type="OrthoDB" id="7065464at2"/>
<dbReference type="Proteomes" id="UP000001171">
    <property type="component" value="Chromosome"/>
</dbReference>
<dbReference type="GO" id="GO:0005737">
    <property type="term" value="C:cytoplasm"/>
    <property type="evidence" value="ECO:0007669"/>
    <property type="project" value="UniProtKB-SubCell"/>
</dbReference>
<dbReference type="GO" id="GO:0060698">
    <property type="term" value="F:endoribonuclease inhibitor activity"/>
    <property type="evidence" value="ECO:0007669"/>
    <property type="project" value="UniProtKB-UniRule"/>
</dbReference>
<dbReference type="GO" id="GO:0019899">
    <property type="term" value="F:enzyme binding"/>
    <property type="evidence" value="ECO:0007669"/>
    <property type="project" value="UniProtKB-UniRule"/>
</dbReference>
<dbReference type="Gene3D" id="3.30.70.970">
    <property type="entry name" value="RraB-like"/>
    <property type="match status" value="1"/>
</dbReference>
<dbReference type="HAMAP" id="MF_01888">
    <property type="entry name" value="RraB"/>
    <property type="match status" value="1"/>
</dbReference>
<dbReference type="InterPro" id="IPR016716">
    <property type="entry name" value="RraB"/>
</dbReference>
<dbReference type="InterPro" id="IPR036701">
    <property type="entry name" value="RraB-like_sf"/>
</dbReference>
<dbReference type="InterPro" id="IPR009671">
    <property type="entry name" value="RraB_dom"/>
</dbReference>
<dbReference type="NCBIfam" id="NF008393">
    <property type="entry name" value="PRK11191.1"/>
    <property type="match status" value="1"/>
</dbReference>
<dbReference type="Pfam" id="PF06877">
    <property type="entry name" value="RraB"/>
    <property type="match status" value="1"/>
</dbReference>
<dbReference type="PIRSF" id="PIRSF018193">
    <property type="entry name" value="UCP018193"/>
    <property type="match status" value="1"/>
</dbReference>
<dbReference type="SUPFAM" id="SSF89946">
    <property type="entry name" value="Hypothetical protein VC0424"/>
    <property type="match status" value="1"/>
</dbReference>
<evidence type="ECO:0000255" key="1">
    <source>
        <dbReference type="HAMAP-Rule" id="MF_01888"/>
    </source>
</evidence>
<comment type="function">
    <text evidence="1">Globally modulates RNA abundance by binding to RNase E (Rne) and regulating its endonucleolytic activity. Can modulate Rne action in a substrate-dependent manner by altering the composition of the degradosome.</text>
</comment>
<comment type="subunit">
    <text evidence="1">Interacts with the C-terminal region of Rne.</text>
</comment>
<comment type="subcellular location">
    <subcellularLocation>
        <location evidence="1">Cytoplasm</location>
    </subcellularLocation>
</comment>
<comment type="similarity">
    <text evidence="1">Belongs to the RraB family.</text>
</comment>
<name>RRAB_IDILO</name>
<gene>
    <name evidence="1" type="primary">rraB</name>
    <name type="ordered locus">IL1951</name>
</gene>